<proteinExistence type="predicted"/>
<sequence length="134" mass="15355">MLKKTSLIFTALLMTGCVQNANVTTPQAQKMQVEKVDKALQKGEADRYLCQDDRVVRVVHATHKKYKKNLHYVTVTFQGVSEKLTLMISERGKNYANIRWMWQERDDFSTLKTNLGEILATQCVSQTSERLSGQ</sequence>
<reference key="1">
    <citation type="journal article" date="1995" name="Mol. Microbiol.">
        <title>Identification and characterization of a cell envelope protein of Haemophilus influenzae contributing to phase variation in colony opacity and nasopharyngeal colonization.</title>
        <authorList>
            <person name="Weiser J.N."/>
            <person name="Chong S.T."/>
            <person name="Greenberg D."/>
            <person name="Fong W."/>
        </authorList>
    </citation>
    <scope>NUCLEOTIDE SEQUENCE [GENOMIC DNA]</scope>
    <source>
        <strain>Rd / H175</strain>
    </source>
</reference>
<reference key="2">
    <citation type="journal article" date="1995" name="Science">
        <title>Whole-genome random sequencing and assembly of Haemophilus influenzae Rd.</title>
        <authorList>
            <person name="Fleischmann R.D."/>
            <person name="Adams M.D."/>
            <person name="White O."/>
            <person name="Clayton R.A."/>
            <person name="Kirkness E.F."/>
            <person name="Kerlavage A.R."/>
            <person name="Bult C.J."/>
            <person name="Tomb J.-F."/>
            <person name="Dougherty B.A."/>
            <person name="Merrick J.M."/>
            <person name="McKenney K."/>
            <person name="Sutton G.G."/>
            <person name="FitzHugh W."/>
            <person name="Fields C.A."/>
            <person name="Gocayne J.D."/>
            <person name="Scott J.D."/>
            <person name="Shirley R."/>
            <person name="Liu L.-I."/>
            <person name="Glodek A."/>
            <person name="Kelley J.M."/>
            <person name="Weidman J.F."/>
            <person name="Phillips C.A."/>
            <person name="Spriggs T."/>
            <person name="Hedblom E."/>
            <person name="Cotton M.D."/>
            <person name="Utterback T.R."/>
            <person name="Hanna M.C."/>
            <person name="Nguyen D.T."/>
            <person name="Saudek D.M."/>
            <person name="Brandon R.C."/>
            <person name="Fine L.D."/>
            <person name="Fritchman J.L."/>
            <person name="Fuhrmann J.L."/>
            <person name="Geoghagen N.S.M."/>
            <person name="Gnehm C.L."/>
            <person name="McDonald L.A."/>
            <person name="Small K.V."/>
            <person name="Fraser C.M."/>
            <person name="Smith H.O."/>
            <person name="Venter J.C."/>
        </authorList>
    </citation>
    <scope>NUCLEOTIDE SEQUENCE [LARGE SCALE GENOMIC DNA]</scope>
    <source>
        <strain>ATCC 51907 / DSM 11121 / KW20 / Rd</strain>
    </source>
</reference>
<protein>
    <recommendedName>
        <fullName>Opacity-associated protein OapB</fullName>
    </recommendedName>
</protein>
<organism>
    <name type="scientific">Haemophilus influenzae (strain ATCC 51907 / DSM 11121 / KW20 / Rd)</name>
    <dbReference type="NCBI Taxonomy" id="71421"/>
    <lineage>
        <taxon>Bacteria</taxon>
        <taxon>Pseudomonadati</taxon>
        <taxon>Pseudomonadota</taxon>
        <taxon>Gammaproteobacteria</taxon>
        <taxon>Pasteurellales</taxon>
        <taxon>Pasteurellaceae</taxon>
        <taxon>Haemophilus</taxon>
    </lineage>
</organism>
<gene>
    <name type="primary">oapB</name>
    <name type="ordered locus">HI_0331</name>
</gene>
<name>OAPB_HAEIN</name>
<accession>P44416</accession>
<keyword id="KW-1185">Reference proteome</keyword>
<dbReference type="EMBL" id="U17037">
    <property type="protein sequence ID" value="AAA56762.1"/>
    <property type="molecule type" value="Genomic_DNA"/>
</dbReference>
<dbReference type="EMBL" id="L42023">
    <property type="protein sequence ID" value="AAC21993.1"/>
    <property type="molecule type" value="Genomic_DNA"/>
</dbReference>
<dbReference type="PIR" id="B64062">
    <property type="entry name" value="B64062"/>
</dbReference>
<dbReference type="RefSeq" id="NP_438495.1">
    <property type="nucleotide sequence ID" value="NC_000907.1"/>
</dbReference>
<dbReference type="SMR" id="P44416"/>
<dbReference type="STRING" id="71421.HI_0331"/>
<dbReference type="EnsemblBacteria" id="AAC21993">
    <property type="protein sequence ID" value="AAC21993"/>
    <property type="gene ID" value="HI_0331"/>
</dbReference>
<dbReference type="KEGG" id="hin:HI_0331"/>
<dbReference type="PATRIC" id="fig|71421.8.peg.348"/>
<dbReference type="eggNOG" id="ENOG5031K1H">
    <property type="taxonomic scope" value="Bacteria"/>
</dbReference>
<dbReference type="HOGENOM" id="CLU_145841_0_0_6"/>
<dbReference type="OrthoDB" id="5689950at2"/>
<dbReference type="BioCyc" id="HINF71421:G1GJ1-347-MONOMER"/>
<dbReference type="Proteomes" id="UP000000579">
    <property type="component" value="Chromosome"/>
</dbReference>
<dbReference type="Gene3D" id="2.40.128.200">
    <property type="match status" value="1"/>
</dbReference>
<dbReference type="InterPro" id="IPR036328">
    <property type="entry name" value="MliC_sf"/>
</dbReference>
<dbReference type="InterPro" id="IPR012097">
    <property type="entry name" value="OapB"/>
</dbReference>
<dbReference type="PIRSF" id="PIRSF007352">
    <property type="entry name" value="OapB"/>
    <property type="match status" value="1"/>
</dbReference>
<dbReference type="SUPFAM" id="SSF141488">
    <property type="entry name" value="YdhA-like"/>
    <property type="match status" value="1"/>
</dbReference>
<dbReference type="PROSITE" id="PS51257">
    <property type="entry name" value="PROKAR_LIPOPROTEIN"/>
    <property type="match status" value="1"/>
</dbReference>
<evidence type="ECO:0000305" key="1"/>
<feature type="chain" id="PRO_0000058017" description="Opacity-associated protein OapB">
    <location>
        <begin position="1"/>
        <end position="134"/>
    </location>
</feature>
<feature type="sequence conflict" description="In Ref. 1; AAA56762." evidence="1" ref="1">
    <original>GQ</original>
    <variation>DNNRAKRTSTWFCFASSPL</variation>
    <location>
        <begin position="133"/>
        <end position="134"/>
    </location>
</feature>